<accession>P9WN60</accession>
<accession>L0TBA4</accession>
<accession>O53256</accession>
<accession>P64199</accession>
<proteinExistence type="inferred from homology"/>
<protein>
    <recommendedName>
        <fullName>Aspartyl/glutamyl-tRNA(Asn/Gln) amidotransferase subunit B</fullName>
        <shortName>Asp/Glu-ADT subunit B</shortName>
        <ecNumber>6.3.5.-</ecNumber>
    </recommendedName>
</protein>
<sequence length="509" mass="54633">MTVAAGAAKAAGAELLDYDEVVARFQPVLGLEVHVELSTATKMFCGCTTTFGGEPNTQVCPVCLGLPGSLPVLNRAAVESAIRIGLALNCEIVPWCRFARKNYFYPDMPKNYQISQYDEPIAINGYLDAPLEDGTTWRVEIERAHMEEDTGKLTHIGSETGRIHGATGSLIDYNRAGVPLIEIVTKPIVGAGARAPQIARSYVTALRDLLRALDVSDVRMDQGSMRCDANVSLKPAGTTEFGTRTETKNVNSLKSVEVAVRYEMQRQGAILASGGRITQETRHFHEAGYTSAGRTKETAEDYRYFPEPDLEPVAPSRELVERLRQTIPELPWLSRRRIQQEWGVSDEVMRDLVNAGAVELVAATVEHGASSEAARAWWGNFLAQKANEAGIGLDELAITPAQVAAVVALVDEGKLSNSLARQVVEGVLAGEGEPEQVMTARGLALVRDDSLTQAAVDEALAANPDVADKIRGGKVAAAGAIVGAVMKATRGQADAARVRELVLEACGQG</sequence>
<feature type="chain" id="PRO_0000427183" description="Aspartyl/glutamyl-tRNA(Asn/Gln) amidotransferase subunit B">
    <location>
        <begin position="1"/>
        <end position="509"/>
    </location>
</feature>
<dbReference type="EC" id="6.3.5.-"/>
<dbReference type="EMBL" id="AE000516">
    <property type="protein sequence ID" value="AAK47418.1"/>
    <property type="molecule type" value="Genomic_DNA"/>
</dbReference>
<dbReference type="PIR" id="D70856">
    <property type="entry name" value="D70856"/>
</dbReference>
<dbReference type="RefSeq" id="WP_003415248.1">
    <property type="nucleotide sequence ID" value="NZ_KK341227.1"/>
</dbReference>
<dbReference type="SMR" id="P9WN60"/>
<dbReference type="KEGG" id="mtc:MT3089"/>
<dbReference type="PATRIC" id="fig|83331.31.peg.3330"/>
<dbReference type="HOGENOM" id="CLU_019240_0_0_11"/>
<dbReference type="Proteomes" id="UP000001020">
    <property type="component" value="Chromosome"/>
</dbReference>
<dbReference type="GO" id="GO:0050566">
    <property type="term" value="F:asparaginyl-tRNA synthase (glutamine-hydrolyzing) activity"/>
    <property type="evidence" value="ECO:0007669"/>
    <property type="project" value="RHEA"/>
</dbReference>
<dbReference type="GO" id="GO:0005524">
    <property type="term" value="F:ATP binding"/>
    <property type="evidence" value="ECO:0007669"/>
    <property type="project" value="UniProtKB-KW"/>
</dbReference>
<dbReference type="GO" id="GO:0050567">
    <property type="term" value="F:glutaminyl-tRNA synthase (glutamine-hydrolyzing) activity"/>
    <property type="evidence" value="ECO:0007669"/>
    <property type="project" value="UniProtKB-UniRule"/>
</dbReference>
<dbReference type="GO" id="GO:0070681">
    <property type="term" value="P:glutaminyl-tRNAGln biosynthesis via transamidation"/>
    <property type="evidence" value="ECO:0007669"/>
    <property type="project" value="TreeGrafter"/>
</dbReference>
<dbReference type="GO" id="GO:0006412">
    <property type="term" value="P:translation"/>
    <property type="evidence" value="ECO:0007669"/>
    <property type="project" value="UniProtKB-UniRule"/>
</dbReference>
<dbReference type="FunFam" id="1.10.10.410:FF:000002">
    <property type="entry name" value="Aspartyl/glutamyl-tRNA(Asn/Gln) amidotransferase subunit B"/>
    <property type="match status" value="1"/>
</dbReference>
<dbReference type="Gene3D" id="1.10.10.410">
    <property type="match status" value="1"/>
</dbReference>
<dbReference type="HAMAP" id="MF_00121">
    <property type="entry name" value="GatB"/>
    <property type="match status" value="1"/>
</dbReference>
<dbReference type="InterPro" id="IPR017959">
    <property type="entry name" value="Asn/Gln-tRNA_amidoTrfase_suB/E"/>
</dbReference>
<dbReference type="InterPro" id="IPR006075">
    <property type="entry name" value="Asn/Gln-tRNA_Trfase_suB/E_cat"/>
</dbReference>
<dbReference type="InterPro" id="IPR018027">
    <property type="entry name" value="Asn/Gln_amidotransferase"/>
</dbReference>
<dbReference type="InterPro" id="IPR003789">
    <property type="entry name" value="Asn/Gln_tRNA_amidoTrase-B-like"/>
</dbReference>
<dbReference type="InterPro" id="IPR004413">
    <property type="entry name" value="GatB"/>
</dbReference>
<dbReference type="InterPro" id="IPR023168">
    <property type="entry name" value="GatB_Yqey_C_2"/>
</dbReference>
<dbReference type="InterPro" id="IPR017958">
    <property type="entry name" value="Gln-tRNA_amidoTrfase_suB_CS"/>
</dbReference>
<dbReference type="InterPro" id="IPR014746">
    <property type="entry name" value="Gln_synth/guanido_kin_cat_dom"/>
</dbReference>
<dbReference type="NCBIfam" id="TIGR00133">
    <property type="entry name" value="gatB"/>
    <property type="match status" value="1"/>
</dbReference>
<dbReference type="NCBIfam" id="NF004012">
    <property type="entry name" value="PRK05477.1-2"/>
    <property type="match status" value="1"/>
</dbReference>
<dbReference type="NCBIfam" id="NF004013">
    <property type="entry name" value="PRK05477.1-3"/>
    <property type="match status" value="1"/>
</dbReference>
<dbReference type="NCBIfam" id="NF004014">
    <property type="entry name" value="PRK05477.1-4"/>
    <property type="match status" value="1"/>
</dbReference>
<dbReference type="PANTHER" id="PTHR11659">
    <property type="entry name" value="GLUTAMYL-TRNA GLN AMIDOTRANSFERASE SUBUNIT B MITOCHONDRIAL AND PROKARYOTIC PET112-RELATED"/>
    <property type="match status" value="1"/>
</dbReference>
<dbReference type="PANTHER" id="PTHR11659:SF0">
    <property type="entry name" value="GLUTAMYL-TRNA(GLN) AMIDOTRANSFERASE SUBUNIT B, MITOCHONDRIAL"/>
    <property type="match status" value="1"/>
</dbReference>
<dbReference type="Pfam" id="PF02934">
    <property type="entry name" value="GatB_N"/>
    <property type="match status" value="1"/>
</dbReference>
<dbReference type="Pfam" id="PF02637">
    <property type="entry name" value="GatB_Yqey"/>
    <property type="match status" value="1"/>
</dbReference>
<dbReference type="SMART" id="SM00845">
    <property type="entry name" value="GatB_Yqey"/>
    <property type="match status" value="1"/>
</dbReference>
<dbReference type="SUPFAM" id="SSF89095">
    <property type="entry name" value="GatB/YqeY motif"/>
    <property type="match status" value="1"/>
</dbReference>
<dbReference type="SUPFAM" id="SSF55931">
    <property type="entry name" value="Glutamine synthetase/guanido kinase"/>
    <property type="match status" value="1"/>
</dbReference>
<dbReference type="PROSITE" id="PS01234">
    <property type="entry name" value="GATB"/>
    <property type="match status" value="1"/>
</dbReference>
<comment type="function">
    <text evidence="1">Allows the formation of correctly charged Asn-tRNA(Asn) or Gln-tRNA(Gln) through the transamidation of misacylated Asp-tRNA(Asn) or Glu-tRNA(Gln) in organisms which lack either or both of asparaginyl-tRNA or glutaminyl-tRNA synthetases. The reaction takes place in the presence of glutamine and ATP through an activated phospho-Asp-tRNA(Asn) or phospho-Glu-tRNA(Gln) (By similarity).</text>
</comment>
<comment type="catalytic activity">
    <reaction>
        <text>L-glutamyl-tRNA(Gln) + L-glutamine + ATP + H2O = L-glutaminyl-tRNA(Gln) + L-glutamate + ADP + phosphate + H(+)</text>
        <dbReference type="Rhea" id="RHEA:17521"/>
        <dbReference type="Rhea" id="RHEA-COMP:9681"/>
        <dbReference type="Rhea" id="RHEA-COMP:9684"/>
        <dbReference type="ChEBI" id="CHEBI:15377"/>
        <dbReference type="ChEBI" id="CHEBI:15378"/>
        <dbReference type="ChEBI" id="CHEBI:29985"/>
        <dbReference type="ChEBI" id="CHEBI:30616"/>
        <dbReference type="ChEBI" id="CHEBI:43474"/>
        <dbReference type="ChEBI" id="CHEBI:58359"/>
        <dbReference type="ChEBI" id="CHEBI:78520"/>
        <dbReference type="ChEBI" id="CHEBI:78521"/>
        <dbReference type="ChEBI" id="CHEBI:456216"/>
    </reaction>
</comment>
<comment type="catalytic activity">
    <reaction>
        <text>L-aspartyl-tRNA(Asn) + L-glutamine + ATP + H2O = L-asparaginyl-tRNA(Asn) + L-glutamate + ADP + phosphate + 2 H(+)</text>
        <dbReference type="Rhea" id="RHEA:14513"/>
        <dbReference type="Rhea" id="RHEA-COMP:9674"/>
        <dbReference type="Rhea" id="RHEA-COMP:9677"/>
        <dbReference type="ChEBI" id="CHEBI:15377"/>
        <dbReference type="ChEBI" id="CHEBI:15378"/>
        <dbReference type="ChEBI" id="CHEBI:29985"/>
        <dbReference type="ChEBI" id="CHEBI:30616"/>
        <dbReference type="ChEBI" id="CHEBI:43474"/>
        <dbReference type="ChEBI" id="CHEBI:58359"/>
        <dbReference type="ChEBI" id="CHEBI:78515"/>
        <dbReference type="ChEBI" id="CHEBI:78516"/>
        <dbReference type="ChEBI" id="CHEBI:456216"/>
    </reaction>
</comment>
<comment type="subunit">
    <text evidence="1">Heterotrimer of A, B and C subunits.</text>
</comment>
<comment type="similarity">
    <text evidence="2">Belongs to the GatB/GatE family. GatB subfamily.</text>
</comment>
<name>GATB_MYCTO</name>
<evidence type="ECO:0000250" key="1"/>
<evidence type="ECO:0000305" key="2"/>
<reference key="1">
    <citation type="journal article" date="2002" name="J. Bacteriol.">
        <title>Whole-genome comparison of Mycobacterium tuberculosis clinical and laboratory strains.</title>
        <authorList>
            <person name="Fleischmann R.D."/>
            <person name="Alland D."/>
            <person name="Eisen J.A."/>
            <person name="Carpenter L."/>
            <person name="White O."/>
            <person name="Peterson J.D."/>
            <person name="DeBoy R.T."/>
            <person name="Dodson R.J."/>
            <person name="Gwinn M.L."/>
            <person name="Haft D.H."/>
            <person name="Hickey E.K."/>
            <person name="Kolonay J.F."/>
            <person name="Nelson W.C."/>
            <person name="Umayam L.A."/>
            <person name="Ermolaeva M.D."/>
            <person name="Salzberg S.L."/>
            <person name="Delcher A."/>
            <person name="Utterback T.R."/>
            <person name="Weidman J.F."/>
            <person name="Khouri H.M."/>
            <person name="Gill J."/>
            <person name="Mikula A."/>
            <person name="Bishai W."/>
            <person name="Jacobs W.R. Jr."/>
            <person name="Venter J.C."/>
            <person name="Fraser C.M."/>
        </authorList>
    </citation>
    <scope>NUCLEOTIDE SEQUENCE [LARGE SCALE GENOMIC DNA]</scope>
    <source>
        <strain>CDC 1551 / Oshkosh</strain>
    </source>
</reference>
<gene>
    <name type="primary">gatB</name>
    <name type="ordered locus">MT3089</name>
</gene>
<keyword id="KW-0067">ATP-binding</keyword>
<keyword id="KW-0436">Ligase</keyword>
<keyword id="KW-0547">Nucleotide-binding</keyword>
<keyword id="KW-0648">Protein biosynthesis</keyword>
<keyword id="KW-1185">Reference proteome</keyword>
<organism>
    <name type="scientific">Mycobacterium tuberculosis (strain CDC 1551 / Oshkosh)</name>
    <dbReference type="NCBI Taxonomy" id="83331"/>
    <lineage>
        <taxon>Bacteria</taxon>
        <taxon>Bacillati</taxon>
        <taxon>Actinomycetota</taxon>
        <taxon>Actinomycetes</taxon>
        <taxon>Mycobacteriales</taxon>
        <taxon>Mycobacteriaceae</taxon>
        <taxon>Mycobacterium</taxon>
        <taxon>Mycobacterium tuberculosis complex</taxon>
    </lineage>
</organism>